<accession>Q82WM9</accession>
<dbReference type="EMBL" id="AL954747">
    <property type="protein sequence ID" value="CAD84550.1"/>
    <property type="molecule type" value="Genomic_DNA"/>
</dbReference>
<dbReference type="RefSeq" id="WP_011111262.1">
    <property type="nucleotide sequence ID" value="NC_004757.1"/>
</dbReference>
<dbReference type="SMR" id="Q82WM9"/>
<dbReference type="STRING" id="228410.NE0639"/>
<dbReference type="DNASU" id="1081578"/>
<dbReference type="GeneID" id="87103836"/>
<dbReference type="KEGG" id="neu:NE0639"/>
<dbReference type="eggNOG" id="COG1826">
    <property type="taxonomic scope" value="Bacteria"/>
</dbReference>
<dbReference type="HOGENOM" id="CLU_086034_5_1_4"/>
<dbReference type="OrthoDB" id="7066617at2"/>
<dbReference type="PhylomeDB" id="Q82WM9"/>
<dbReference type="Proteomes" id="UP000001416">
    <property type="component" value="Chromosome"/>
</dbReference>
<dbReference type="GO" id="GO:0033281">
    <property type="term" value="C:TAT protein transport complex"/>
    <property type="evidence" value="ECO:0007669"/>
    <property type="project" value="UniProtKB-UniRule"/>
</dbReference>
<dbReference type="GO" id="GO:0008320">
    <property type="term" value="F:protein transmembrane transporter activity"/>
    <property type="evidence" value="ECO:0007669"/>
    <property type="project" value="UniProtKB-UniRule"/>
</dbReference>
<dbReference type="GO" id="GO:0043953">
    <property type="term" value="P:protein transport by the Tat complex"/>
    <property type="evidence" value="ECO:0007669"/>
    <property type="project" value="UniProtKB-UniRule"/>
</dbReference>
<dbReference type="Gene3D" id="1.20.5.3310">
    <property type="match status" value="1"/>
</dbReference>
<dbReference type="HAMAP" id="MF_00236">
    <property type="entry name" value="TatA_E"/>
    <property type="match status" value="1"/>
</dbReference>
<dbReference type="InterPro" id="IPR003369">
    <property type="entry name" value="TatA/B/E"/>
</dbReference>
<dbReference type="InterPro" id="IPR006312">
    <property type="entry name" value="TatA/E"/>
</dbReference>
<dbReference type="NCBIfam" id="NF002813">
    <property type="entry name" value="PRK02958.1"/>
    <property type="match status" value="1"/>
</dbReference>
<dbReference type="NCBIfam" id="TIGR01411">
    <property type="entry name" value="tatAE"/>
    <property type="match status" value="1"/>
</dbReference>
<dbReference type="PANTHER" id="PTHR42982">
    <property type="entry name" value="SEC-INDEPENDENT PROTEIN TRANSLOCASE PROTEIN TATA"/>
    <property type="match status" value="1"/>
</dbReference>
<dbReference type="PANTHER" id="PTHR42982:SF1">
    <property type="entry name" value="SEC-INDEPENDENT PROTEIN TRANSLOCASE PROTEIN TATA"/>
    <property type="match status" value="1"/>
</dbReference>
<dbReference type="Pfam" id="PF02416">
    <property type="entry name" value="TatA_B_E"/>
    <property type="match status" value="1"/>
</dbReference>
<evidence type="ECO:0000255" key="1">
    <source>
        <dbReference type="HAMAP-Rule" id="MF_00236"/>
    </source>
</evidence>
<evidence type="ECO:0000256" key="2">
    <source>
        <dbReference type="SAM" id="MobiDB-lite"/>
    </source>
</evidence>
<feature type="chain" id="PRO_1000044410" description="Sec-independent protein translocase protein TatA">
    <location>
        <begin position="1"/>
        <end position="76"/>
    </location>
</feature>
<feature type="transmembrane region" description="Helical" evidence="1">
    <location>
        <begin position="1"/>
        <end position="21"/>
    </location>
</feature>
<feature type="region of interest" description="Disordered" evidence="2">
    <location>
        <begin position="41"/>
        <end position="76"/>
    </location>
</feature>
<feature type="compositionally biased region" description="Basic and acidic residues" evidence="2">
    <location>
        <begin position="64"/>
        <end position="76"/>
    </location>
</feature>
<name>TATA_NITEU</name>
<organism>
    <name type="scientific">Nitrosomonas europaea (strain ATCC 19718 / CIP 103999 / KCTC 2705 / NBRC 14298)</name>
    <dbReference type="NCBI Taxonomy" id="228410"/>
    <lineage>
        <taxon>Bacteria</taxon>
        <taxon>Pseudomonadati</taxon>
        <taxon>Pseudomonadota</taxon>
        <taxon>Betaproteobacteria</taxon>
        <taxon>Nitrosomonadales</taxon>
        <taxon>Nitrosomonadaceae</taxon>
        <taxon>Nitrosomonas</taxon>
    </lineage>
</organism>
<protein>
    <recommendedName>
        <fullName evidence="1">Sec-independent protein translocase protein TatA</fullName>
    </recommendedName>
</protein>
<keyword id="KW-0997">Cell inner membrane</keyword>
<keyword id="KW-1003">Cell membrane</keyword>
<keyword id="KW-0472">Membrane</keyword>
<keyword id="KW-0653">Protein transport</keyword>
<keyword id="KW-1185">Reference proteome</keyword>
<keyword id="KW-0811">Translocation</keyword>
<keyword id="KW-0812">Transmembrane</keyword>
<keyword id="KW-1133">Transmembrane helix</keyword>
<keyword id="KW-0813">Transport</keyword>
<sequence>MGSFSIWHWLVVLAIVVLVFGTKKLRNLGSDLGGAVRGFKEGMKGAEEESTPPPPAQQVTGHSIKSEIEEKDQTKV</sequence>
<comment type="function">
    <text evidence="1">Part of the twin-arginine translocation (Tat) system that transports large folded proteins containing a characteristic twin-arginine motif in their signal peptide across membranes. TatA could form the protein-conducting channel of the Tat system.</text>
</comment>
<comment type="subunit">
    <text evidence="1">The Tat system comprises two distinct complexes: a TatABC complex, containing multiple copies of TatA, TatB and TatC subunits, and a separate TatA complex, containing only TatA subunits. Substrates initially bind to the TatABC complex, which probably triggers association of the separate TatA complex to form the active translocon.</text>
</comment>
<comment type="subcellular location">
    <subcellularLocation>
        <location evidence="1">Cell inner membrane</location>
        <topology evidence="1">Single-pass membrane protein</topology>
    </subcellularLocation>
</comment>
<comment type="similarity">
    <text evidence="1">Belongs to the TatA/E family.</text>
</comment>
<gene>
    <name evidence="1" type="primary">tatA</name>
    <name type="ordered locus">NE0639</name>
</gene>
<proteinExistence type="inferred from homology"/>
<reference key="1">
    <citation type="journal article" date="2003" name="J. Bacteriol.">
        <title>Complete genome sequence of the ammonia-oxidizing bacterium and obligate chemolithoautotroph Nitrosomonas europaea.</title>
        <authorList>
            <person name="Chain P."/>
            <person name="Lamerdin J.E."/>
            <person name="Larimer F.W."/>
            <person name="Regala W."/>
            <person name="Lao V."/>
            <person name="Land M.L."/>
            <person name="Hauser L."/>
            <person name="Hooper A.B."/>
            <person name="Klotz M.G."/>
            <person name="Norton J."/>
            <person name="Sayavedra-Soto L.A."/>
            <person name="Arciero D.M."/>
            <person name="Hommes N.G."/>
            <person name="Whittaker M.M."/>
            <person name="Arp D.J."/>
        </authorList>
    </citation>
    <scope>NUCLEOTIDE SEQUENCE [LARGE SCALE GENOMIC DNA]</scope>
    <source>
        <strain>ATCC 19718 / CIP 103999 / KCTC 2705 / NBRC 14298</strain>
    </source>
</reference>